<dbReference type="EC" id="6.3.4.19" evidence="1"/>
<dbReference type="EMBL" id="AE000516">
    <property type="protein sequence ID" value="AAK48088.1"/>
    <property type="molecule type" value="Genomic_DNA"/>
</dbReference>
<dbReference type="PIR" id="B70561">
    <property type="entry name" value="B70561"/>
</dbReference>
<dbReference type="RefSeq" id="WP_003899608.1">
    <property type="nucleotide sequence ID" value="NZ_KK341227.1"/>
</dbReference>
<dbReference type="SMR" id="P9WG52"/>
<dbReference type="KEGG" id="mtc:MT3727"/>
<dbReference type="PATRIC" id="fig|83331.31.peg.4011"/>
<dbReference type="HOGENOM" id="CLU_018869_1_1_11"/>
<dbReference type="Proteomes" id="UP000001020">
    <property type="component" value="Chromosome"/>
</dbReference>
<dbReference type="GO" id="GO:0005737">
    <property type="term" value="C:cytoplasm"/>
    <property type="evidence" value="ECO:0007669"/>
    <property type="project" value="UniProtKB-SubCell"/>
</dbReference>
<dbReference type="GO" id="GO:0005524">
    <property type="term" value="F:ATP binding"/>
    <property type="evidence" value="ECO:0007669"/>
    <property type="project" value="UniProtKB-UniRule"/>
</dbReference>
<dbReference type="GO" id="GO:0032267">
    <property type="term" value="F:tRNA(Ile)-lysidine synthase activity"/>
    <property type="evidence" value="ECO:0007669"/>
    <property type="project" value="UniProtKB-EC"/>
</dbReference>
<dbReference type="GO" id="GO:0006400">
    <property type="term" value="P:tRNA modification"/>
    <property type="evidence" value="ECO:0007669"/>
    <property type="project" value="UniProtKB-UniRule"/>
</dbReference>
<dbReference type="CDD" id="cd01992">
    <property type="entry name" value="TilS_N"/>
    <property type="match status" value="1"/>
</dbReference>
<dbReference type="Gene3D" id="1.20.59.20">
    <property type="match status" value="1"/>
</dbReference>
<dbReference type="Gene3D" id="3.40.50.620">
    <property type="entry name" value="HUPs"/>
    <property type="match status" value="1"/>
</dbReference>
<dbReference type="HAMAP" id="MF_01161">
    <property type="entry name" value="tRNA_Ile_lys_synt"/>
    <property type="match status" value="1"/>
</dbReference>
<dbReference type="InterPro" id="IPR014729">
    <property type="entry name" value="Rossmann-like_a/b/a_fold"/>
</dbReference>
<dbReference type="InterPro" id="IPR011063">
    <property type="entry name" value="TilS/TtcA_N"/>
</dbReference>
<dbReference type="InterPro" id="IPR012094">
    <property type="entry name" value="tRNA_Ile_lys_synt"/>
</dbReference>
<dbReference type="InterPro" id="IPR012795">
    <property type="entry name" value="tRNA_Ile_lys_synt_N"/>
</dbReference>
<dbReference type="InterPro" id="IPR015262">
    <property type="entry name" value="tRNA_Ile_lys_synt_subst-bd"/>
</dbReference>
<dbReference type="NCBIfam" id="TIGR02432">
    <property type="entry name" value="lysidine_TilS_N"/>
    <property type="match status" value="1"/>
</dbReference>
<dbReference type="PANTHER" id="PTHR43033">
    <property type="entry name" value="TRNA(ILE)-LYSIDINE SYNTHASE-RELATED"/>
    <property type="match status" value="1"/>
</dbReference>
<dbReference type="PANTHER" id="PTHR43033:SF1">
    <property type="entry name" value="TRNA(ILE)-LYSIDINE SYNTHASE-RELATED"/>
    <property type="match status" value="1"/>
</dbReference>
<dbReference type="Pfam" id="PF01171">
    <property type="entry name" value="ATP_bind_3"/>
    <property type="match status" value="1"/>
</dbReference>
<dbReference type="Pfam" id="PF09179">
    <property type="entry name" value="TilS"/>
    <property type="match status" value="1"/>
</dbReference>
<dbReference type="SUPFAM" id="SSF52402">
    <property type="entry name" value="Adenine nucleotide alpha hydrolases-like"/>
    <property type="match status" value="1"/>
</dbReference>
<dbReference type="SUPFAM" id="SSF82829">
    <property type="entry name" value="MesJ substrate recognition domain-like"/>
    <property type="match status" value="1"/>
</dbReference>
<comment type="function">
    <text evidence="1">Ligates lysine onto the cytidine present at position 34 of the AUA codon-specific tRNA(Ile) that contains the anticodon CAU, in an ATP-dependent manner. Cytidine is converted to lysidine, thus changing the amino acid specificity of the tRNA from methionine to isoleucine.</text>
</comment>
<comment type="catalytic activity">
    <reaction evidence="1">
        <text>cytidine(34) in tRNA(Ile2) + L-lysine + ATP = lysidine(34) in tRNA(Ile2) + AMP + diphosphate + H(+)</text>
        <dbReference type="Rhea" id="RHEA:43744"/>
        <dbReference type="Rhea" id="RHEA-COMP:10625"/>
        <dbReference type="Rhea" id="RHEA-COMP:10670"/>
        <dbReference type="ChEBI" id="CHEBI:15378"/>
        <dbReference type="ChEBI" id="CHEBI:30616"/>
        <dbReference type="ChEBI" id="CHEBI:32551"/>
        <dbReference type="ChEBI" id="CHEBI:33019"/>
        <dbReference type="ChEBI" id="CHEBI:82748"/>
        <dbReference type="ChEBI" id="CHEBI:83665"/>
        <dbReference type="ChEBI" id="CHEBI:456215"/>
        <dbReference type="EC" id="6.3.4.19"/>
    </reaction>
</comment>
<comment type="subcellular location">
    <subcellularLocation>
        <location evidence="1">Cytoplasm</location>
    </subcellularLocation>
</comment>
<comment type="domain">
    <text evidence="1">The N-terminal region contains the highly conserved SGGXDS motif, predicted to be a P-loop motif involved in ATP binding.</text>
</comment>
<comment type="similarity">
    <text evidence="1">Belongs to the tRNA(Ile)-lysidine synthase family.</text>
</comment>
<name>TILS_MYCTO</name>
<keyword id="KW-0067">ATP-binding</keyword>
<keyword id="KW-0963">Cytoplasm</keyword>
<keyword id="KW-0436">Ligase</keyword>
<keyword id="KW-0547">Nucleotide-binding</keyword>
<keyword id="KW-1185">Reference proteome</keyword>
<keyword id="KW-0819">tRNA processing</keyword>
<sequence>MDRQSAVAQLRAAAEQFARVHLDACDRWSVGLSGGPDSLALTAVAARLWPTTALIVDHGLQPGSATVAETARIQAISLGCVDARVLCVQVGAAGGREAAARSARYSALEEHRDGPVLLAHTLDDQAETVLLGLGRGSGARSIAGMRPYDPPWCRPLLGVRRSVTHAACRELGLTAWQDPHNTDRRFTRTRLRTEVLPLLEDVLGGGVAEALARTATALREDTDLIDTIAAQALPGAAVAGSRGQELSTSALTALPDAVRRRVIRGWLLAGGATGLTDRQIRGVDRLVTAWRGQGGVAVGSTLRGQRLVAGRRDGVLVLRREPV</sequence>
<gene>
    <name evidence="1" type="primary">tilS</name>
    <name type="ordered locus">MT3727</name>
</gene>
<proteinExistence type="inferred from homology"/>
<organism>
    <name type="scientific">Mycobacterium tuberculosis (strain CDC 1551 / Oshkosh)</name>
    <dbReference type="NCBI Taxonomy" id="83331"/>
    <lineage>
        <taxon>Bacteria</taxon>
        <taxon>Bacillati</taxon>
        <taxon>Actinomycetota</taxon>
        <taxon>Actinomycetes</taxon>
        <taxon>Mycobacteriales</taxon>
        <taxon>Mycobacteriaceae</taxon>
        <taxon>Mycobacterium</taxon>
        <taxon>Mycobacterium tuberculosis complex</taxon>
    </lineage>
</organism>
<accession>P9WG52</accession>
<accession>L0TD31</accession>
<accession>O06382</accession>
<accession>P67151</accession>
<feature type="chain" id="PRO_0000428422" description="tRNA(Ile)-lysidine synthase">
    <location>
        <begin position="1"/>
        <end position="323"/>
    </location>
</feature>
<feature type="binding site" evidence="1">
    <location>
        <begin position="33"/>
        <end position="38"/>
    </location>
    <ligand>
        <name>ATP</name>
        <dbReference type="ChEBI" id="CHEBI:30616"/>
    </ligand>
</feature>
<protein>
    <recommendedName>
        <fullName evidence="1">tRNA(Ile)-lysidine synthase</fullName>
        <ecNumber evidence="1">6.3.4.19</ecNumber>
    </recommendedName>
    <alternativeName>
        <fullName evidence="1">tRNA(Ile)-2-lysyl-cytidine synthase</fullName>
    </alternativeName>
    <alternativeName>
        <fullName evidence="1">tRNA(Ile)-lysidine synthetase</fullName>
    </alternativeName>
</protein>
<reference key="1">
    <citation type="journal article" date="2002" name="J. Bacteriol.">
        <title>Whole-genome comparison of Mycobacterium tuberculosis clinical and laboratory strains.</title>
        <authorList>
            <person name="Fleischmann R.D."/>
            <person name="Alland D."/>
            <person name="Eisen J.A."/>
            <person name="Carpenter L."/>
            <person name="White O."/>
            <person name="Peterson J.D."/>
            <person name="DeBoy R.T."/>
            <person name="Dodson R.J."/>
            <person name="Gwinn M.L."/>
            <person name="Haft D.H."/>
            <person name="Hickey E.K."/>
            <person name="Kolonay J.F."/>
            <person name="Nelson W.C."/>
            <person name="Umayam L.A."/>
            <person name="Ermolaeva M.D."/>
            <person name="Salzberg S.L."/>
            <person name="Delcher A."/>
            <person name="Utterback T.R."/>
            <person name="Weidman J.F."/>
            <person name="Khouri H.M."/>
            <person name="Gill J."/>
            <person name="Mikula A."/>
            <person name="Bishai W."/>
            <person name="Jacobs W.R. Jr."/>
            <person name="Venter J.C."/>
            <person name="Fraser C.M."/>
        </authorList>
    </citation>
    <scope>NUCLEOTIDE SEQUENCE [LARGE SCALE GENOMIC DNA]</scope>
    <source>
        <strain>CDC 1551 / Oshkosh</strain>
    </source>
</reference>
<evidence type="ECO:0000255" key="1">
    <source>
        <dbReference type="HAMAP-Rule" id="MF_01161"/>
    </source>
</evidence>